<evidence type="ECO:0000250" key="1"/>
<evidence type="ECO:0000255" key="2">
    <source>
        <dbReference type="PROSITE-ProRule" id="PRU00041"/>
    </source>
</evidence>
<evidence type="ECO:0000255" key="3">
    <source>
        <dbReference type="PROSITE-ProRule" id="PRU00159"/>
    </source>
</evidence>
<evidence type="ECO:0000255" key="4">
    <source>
        <dbReference type="PROSITE-ProRule" id="PRU00618"/>
    </source>
</evidence>
<evidence type="ECO:0000255" key="5">
    <source>
        <dbReference type="PROSITE-ProRule" id="PRU10027"/>
    </source>
</evidence>
<evidence type="ECO:0000256" key="6">
    <source>
        <dbReference type="SAM" id="MobiDB-lite"/>
    </source>
</evidence>
<evidence type="ECO:0000269" key="7">
    <source>
    </source>
</evidence>
<evidence type="ECO:0000269" key="8">
    <source>
    </source>
</evidence>
<evidence type="ECO:0000269" key="9">
    <source>
    </source>
</evidence>
<evidence type="ECO:0000305" key="10"/>
<keyword id="KW-0067">ATP-binding</keyword>
<keyword id="KW-0418">Kinase</keyword>
<keyword id="KW-0547">Nucleotide-binding</keyword>
<keyword id="KW-0597">Phosphoprotein</keyword>
<keyword id="KW-1185">Reference proteome</keyword>
<keyword id="KW-0723">Serine/threonine-protein kinase</keyword>
<keyword id="KW-0808">Transferase</keyword>
<keyword id="KW-0843">Virulence</keyword>
<gene>
    <name type="primary">SCH9</name>
    <name type="ordered locus">CAALFM_C203940CA</name>
    <name type="ORF">CaO19.829</name>
    <name type="ORF">CaO19.8449</name>
</gene>
<organism>
    <name type="scientific">Candida albicans (strain SC5314 / ATCC MYA-2876)</name>
    <name type="common">Yeast</name>
    <dbReference type="NCBI Taxonomy" id="237561"/>
    <lineage>
        <taxon>Eukaryota</taxon>
        <taxon>Fungi</taxon>
        <taxon>Dikarya</taxon>
        <taxon>Ascomycota</taxon>
        <taxon>Saccharomycotina</taxon>
        <taxon>Pichiomycetes</taxon>
        <taxon>Debaryomycetaceae</taxon>
        <taxon>Candida/Lodderomyces clade</taxon>
        <taxon>Candida</taxon>
    </lineage>
</organism>
<accession>Q5AHG6</accession>
<accession>A0A1D8PGZ3</accession>
<feature type="chain" id="PRO_0000422106" description="Serine/threonine-protein kinase SCH9">
    <location>
        <begin position="1"/>
        <end position="787"/>
    </location>
</feature>
<feature type="domain" description="C2" evidence="2">
    <location>
        <begin position="182"/>
        <end position="354"/>
    </location>
</feature>
<feature type="domain" description="Protein kinase" evidence="3">
    <location>
        <begin position="392"/>
        <end position="653"/>
    </location>
</feature>
<feature type="domain" description="AGC-kinase C-terminal" evidence="4">
    <location>
        <begin position="654"/>
        <end position="729"/>
    </location>
</feature>
<feature type="region of interest" description="Disordered" evidence="6">
    <location>
        <begin position="1"/>
        <end position="82"/>
    </location>
</feature>
<feature type="region of interest" description="Disordered" evidence="6">
    <location>
        <begin position="132"/>
        <end position="172"/>
    </location>
</feature>
<feature type="region of interest" description="Disordered" evidence="6">
    <location>
        <begin position="238"/>
        <end position="280"/>
    </location>
</feature>
<feature type="compositionally biased region" description="Low complexity" evidence="6">
    <location>
        <begin position="132"/>
        <end position="155"/>
    </location>
</feature>
<feature type="compositionally biased region" description="Polar residues" evidence="6">
    <location>
        <begin position="156"/>
        <end position="172"/>
    </location>
</feature>
<feature type="compositionally biased region" description="Polar residues" evidence="6">
    <location>
        <begin position="239"/>
        <end position="263"/>
    </location>
</feature>
<feature type="active site" description="Proton acceptor" evidence="3 5">
    <location>
        <position position="518"/>
    </location>
</feature>
<feature type="binding site" evidence="3">
    <location>
        <begin position="398"/>
        <end position="406"/>
    </location>
    <ligand>
        <name>ATP</name>
        <dbReference type="ChEBI" id="CHEBI:30616"/>
    </ligand>
</feature>
<feature type="binding site" evidence="3">
    <location>
        <position position="421"/>
    </location>
    <ligand>
        <name>ATP</name>
        <dbReference type="ChEBI" id="CHEBI:30616"/>
    </ligand>
</feature>
<protein>
    <recommendedName>
        <fullName>Serine/threonine-protein kinase SCH9</fullName>
        <ecNumber>2.7.11.1</ecNumber>
    </recommendedName>
</protein>
<dbReference type="EC" id="2.7.11.1"/>
<dbReference type="EMBL" id="CP017624">
    <property type="protein sequence ID" value="AOW27421.1"/>
    <property type="molecule type" value="Genomic_DNA"/>
</dbReference>
<dbReference type="RefSeq" id="XP_720953.2">
    <property type="nucleotide sequence ID" value="XM_715860.2"/>
</dbReference>
<dbReference type="SMR" id="Q5AHG6"/>
<dbReference type="FunCoup" id="Q5AHG6">
    <property type="interactions" value="132"/>
</dbReference>
<dbReference type="STRING" id="237561.Q5AHG6"/>
<dbReference type="EnsemblFungi" id="C2_03940C_A-T">
    <property type="protein sequence ID" value="C2_03940C_A-T-p1"/>
    <property type="gene ID" value="C2_03940C_A"/>
</dbReference>
<dbReference type="GeneID" id="3637421"/>
<dbReference type="KEGG" id="cal:CAALFM_C203940CA"/>
<dbReference type="CGD" id="CAL0000175489">
    <property type="gene designation" value="SCH9"/>
</dbReference>
<dbReference type="VEuPathDB" id="FungiDB:C2_03940C_A"/>
<dbReference type="eggNOG" id="KOG0598">
    <property type="taxonomic scope" value="Eukaryota"/>
</dbReference>
<dbReference type="HOGENOM" id="CLU_000288_52_2_1"/>
<dbReference type="InParanoid" id="Q5AHG6"/>
<dbReference type="OrthoDB" id="63267at2759"/>
<dbReference type="PHI-base" id="PHI:2557"/>
<dbReference type="PRO" id="PR:Q5AHG6"/>
<dbReference type="Proteomes" id="UP000000559">
    <property type="component" value="Chromosome 2"/>
</dbReference>
<dbReference type="GO" id="GO:0000785">
    <property type="term" value="C:chromatin"/>
    <property type="evidence" value="ECO:0007669"/>
    <property type="project" value="EnsemblFungi"/>
</dbReference>
<dbReference type="GO" id="GO:0000329">
    <property type="term" value="C:fungal-type vacuole membrane"/>
    <property type="evidence" value="ECO:0007669"/>
    <property type="project" value="EnsemblFungi"/>
</dbReference>
<dbReference type="GO" id="GO:0005634">
    <property type="term" value="C:nucleus"/>
    <property type="evidence" value="ECO:0007669"/>
    <property type="project" value="EnsemblFungi"/>
</dbReference>
<dbReference type="GO" id="GO:0005524">
    <property type="term" value="F:ATP binding"/>
    <property type="evidence" value="ECO:0007669"/>
    <property type="project" value="UniProtKB-KW"/>
</dbReference>
<dbReference type="GO" id="GO:0106310">
    <property type="term" value="F:protein serine kinase activity"/>
    <property type="evidence" value="ECO:0007669"/>
    <property type="project" value="RHEA"/>
</dbReference>
<dbReference type="GO" id="GO:0004674">
    <property type="term" value="F:protein serine/threonine kinase activity"/>
    <property type="evidence" value="ECO:0000318"/>
    <property type="project" value="GO_Central"/>
</dbReference>
<dbReference type="GO" id="GO:0034599">
    <property type="term" value="P:cellular response to oxidative stress"/>
    <property type="evidence" value="ECO:0007669"/>
    <property type="project" value="EnsemblFungi"/>
</dbReference>
<dbReference type="GO" id="GO:0009267">
    <property type="term" value="P:cellular response to starvation"/>
    <property type="evidence" value="ECO:0000315"/>
    <property type="project" value="CGD"/>
</dbReference>
<dbReference type="GO" id="GO:0001410">
    <property type="term" value="P:chlamydospore formation"/>
    <property type="evidence" value="ECO:0000315"/>
    <property type="project" value="CGD"/>
</dbReference>
<dbReference type="GO" id="GO:0044114">
    <property type="term" value="P:development of symbiont in host"/>
    <property type="evidence" value="ECO:0000315"/>
    <property type="project" value="CGD"/>
</dbReference>
<dbReference type="GO" id="GO:0030447">
    <property type="term" value="P:filamentous growth"/>
    <property type="evidence" value="ECO:0000315"/>
    <property type="project" value="CGD"/>
</dbReference>
<dbReference type="GO" id="GO:0044182">
    <property type="term" value="P:filamentous growth of a population of unicellular organisms"/>
    <property type="evidence" value="ECO:0000315"/>
    <property type="project" value="CGD"/>
</dbReference>
<dbReference type="GO" id="GO:0036171">
    <property type="term" value="P:filamentous growth of a population of unicellular organisms in response to chemical stimulus"/>
    <property type="evidence" value="ECO:0000315"/>
    <property type="project" value="CGD"/>
</dbReference>
<dbReference type="GO" id="GO:0036170">
    <property type="term" value="P:filamentous growth of a population of unicellular organisms in response to starvation"/>
    <property type="evidence" value="ECO:0000315"/>
    <property type="project" value="CGD"/>
</dbReference>
<dbReference type="GO" id="GO:0035556">
    <property type="term" value="P:intracellular signal transduction"/>
    <property type="evidence" value="ECO:0000318"/>
    <property type="project" value="GO_Central"/>
</dbReference>
<dbReference type="GO" id="GO:1900438">
    <property type="term" value="P:negative regulation of filamentous growth of a population of unicellular organisms in response to chemical stimulus"/>
    <property type="evidence" value="ECO:0000315"/>
    <property type="project" value="CGD"/>
</dbReference>
<dbReference type="GO" id="GO:1900436">
    <property type="term" value="P:positive regulation of filamentous growth of a population of unicellular organisms in response to starvation"/>
    <property type="evidence" value="ECO:0000315"/>
    <property type="project" value="CGD"/>
</dbReference>
<dbReference type="GO" id="GO:1904828">
    <property type="term" value="P:positive regulation of hydrogen sulfide biosynthetic process"/>
    <property type="evidence" value="ECO:0007669"/>
    <property type="project" value="EnsemblFungi"/>
</dbReference>
<dbReference type="GO" id="GO:0060963">
    <property type="term" value="P:positive regulation of ribosomal protein gene transcription by RNA polymerase II"/>
    <property type="evidence" value="ECO:0007669"/>
    <property type="project" value="EnsemblFungi"/>
</dbReference>
<dbReference type="GO" id="GO:0045943">
    <property type="term" value="P:positive regulation of transcription by RNA polymerase I"/>
    <property type="evidence" value="ECO:0007669"/>
    <property type="project" value="EnsemblFungi"/>
</dbReference>
<dbReference type="GO" id="GO:0045945">
    <property type="term" value="P:positive regulation of transcription by RNA polymerase III"/>
    <property type="evidence" value="ECO:0007669"/>
    <property type="project" value="EnsemblFungi"/>
</dbReference>
<dbReference type="GO" id="GO:1901494">
    <property type="term" value="P:regulation of cysteine metabolic process"/>
    <property type="evidence" value="ECO:0007669"/>
    <property type="project" value="EnsemblFungi"/>
</dbReference>
<dbReference type="GO" id="GO:0032880">
    <property type="term" value="P:regulation of protein localization"/>
    <property type="evidence" value="ECO:0007669"/>
    <property type="project" value="EnsemblFungi"/>
</dbReference>
<dbReference type="GO" id="GO:0047484">
    <property type="term" value="P:regulation of response to osmotic stress"/>
    <property type="evidence" value="ECO:0007669"/>
    <property type="project" value="EnsemblFungi"/>
</dbReference>
<dbReference type="GO" id="GO:0090153">
    <property type="term" value="P:regulation of sphingolipid biosynthetic process"/>
    <property type="evidence" value="ECO:0007669"/>
    <property type="project" value="EnsemblFungi"/>
</dbReference>
<dbReference type="GO" id="GO:0033660">
    <property type="term" value="P:symbiont-mediated suppression of host resistance gene-dependent defense response"/>
    <property type="evidence" value="ECO:0000315"/>
    <property type="project" value="CGD"/>
</dbReference>
<dbReference type="CDD" id="cd11651">
    <property type="entry name" value="YPK1_N_like"/>
    <property type="match status" value="1"/>
</dbReference>
<dbReference type="FunFam" id="1.10.510.10:FF:000008">
    <property type="entry name" value="Non-specific serine/threonine protein kinase"/>
    <property type="match status" value="1"/>
</dbReference>
<dbReference type="FunFam" id="3.30.200.20:FF:000116">
    <property type="entry name" value="Non-specific serine/threonine protein kinase"/>
    <property type="match status" value="1"/>
</dbReference>
<dbReference type="Gene3D" id="2.60.40.150">
    <property type="entry name" value="C2 domain"/>
    <property type="match status" value="1"/>
</dbReference>
<dbReference type="Gene3D" id="3.30.200.20">
    <property type="entry name" value="Phosphorylase Kinase, domain 1"/>
    <property type="match status" value="1"/>
</dbReference>
<dbReference type="Gene3D" id="1.10.510.10">
    <property type="entry name" value="Transferase(Phosphotransferase) domain 1"/>
    <property type="match status" value="1"/>
</dbReference>
<dbReference type="InterPro" id="IPR000961">
    <property type="entry name" value="AGC-kinase_C"/>
</dbReference>
<dbReference type="InterPro" id="IPR000008">
    <property type="entry name" value="C2_dom"/>
</dbReference>
<dbReference type="InterPro" id="IPR035892">
    <property type="entry name" value="C2_domain_sf"/>
</dbReference>
<dbReference type="InterPro" id="IPR011009">
    <property type="entry name" value="Kinase-like_dom_sf"/>
</dbReference>
<dbReference type="InterPro" id="IPR017892">
    <property type="entry name" value="Pkinase_C"/>
</dbReference>
<dbReference type="InterPro" id="IPR000719">
    <property type="entry name" value="Prot_kinase_dom"/>
</dbReference>
<dbReference type="InterPro" id="IPR017441">
    <property type="entry name" value="Protein_kinase_ATP_BS"/>
</dbReference>
<dbReference type="InterPro" id="IPR008271">
    <property type="entry name" value="Ser/Thr_kinase_AS"/>
</dbReference>
<dbReference type="PANTHER" id="PTHR24351">
    <property type="entry name" value="RIBOSOMAL PROTEIN S6 KINASE"/>
    <property type="match status" value="1"/>
</dbReference>
<dbReference type="Pfam" id="PF00168">
    <property type="entry name" value="C2"/>
    <property type="match status" value="1"/>
</dbReference>
<dbReference type="Pfam" id="PF00069">
    <property type="entry name" value="Pkinase"/>
    <property type="match status" value="1"/>
</dbReference>
<dbReference type="Pfam" id="PF00433">
    <property type="entry name" value="Pkinase_C"/>
    <property type="match status" value="1"/>
</dbReference>
<dbReference type="SMART" id="SM00239">
    <property type="entry name" value="C2"/>
    <property type="match status" value="1"/>
</dbReference>
<dbReference type="SMART" id="SM00133">
    <property type="entry name" value="S_TK_X"/>
    <property type="match status" value="1"/>
</dbReference>
<dbReference type="SMART" id="SM00220">
    <property type="entry name" value="S_TKc"/>
    <property type="match status" value="1"/>
</dbReference>
<dbReference type="SUPFAM" id="SSF49562">
    <property type="entry name" value="C2 domain (Calcium/lipid-binding domain, CaLB)"/>
    <property type="match status" value="1"/>
</dbReference>
<dbReference type="SUPFAM" id="SSF56112">
    <property type="entry name" value="Protein kinase-like (PK-like)"/>
    <property type="match status" value="1"/>
</dbReference>
<dbReference type="PROSITE" id="PS51285">
    <property type="entry name" value="AGC_KINASE_CTER"/>
    <property type="match status" value="1"/>
</dbReference>
<dbReference type="PROSITE" id="PS50004">
    <property type="entry name" value="C2"/>
    <property type="match status" value="1"/>
</dbReference>
<dbReference type="PROSITE" id="PS00107">
    <property type="entry name" value="PROTEIN_KINASE_ATP"/>
    <property type="match status" value="1"/>
</dbReference>
<dbReference type="PROSITE" id="PS50011">
    <property type="entry name" value="PROTEIN_KINASE_DOM"/>
    <property type="match status" value="1"/>
</dbReference>
<dbReference type="PROSITE" id="PS00108">
    <property type="entry name" value="PROTEIN_KINASE_ST"/>
    <property type="match status" value="1"/>
</dbReference>
<comment type="function">
    <text evidence="1 7 8 9">Protein kinase that is part of growth control pathway which is at least partially redundant with the cAMP pathway (By similarity). Plays a role in filamentous growth and virulence. Prevents hypha formation specifically under hypoxia at high CO(2) levels. Required for chlamydospore formation, distinctive morphological feature of the fungal pathogen C.albicans that can be induced to form in oxygen-limited environments and has been reported in clinical specimens.</text>
</comment>
<comment type="catalytic activity">
    <reaction>
        <text>L-seryl-[protein] + ATP = O-phospho-L-seryl-[protein] + ADP + H(+)</text>
        <dbReference type="Rhea" id="RHEA:17989"/>
        <dbReference type="Rhea" id="RHEA-COMP:9863"/>
        <dbReference type="Rhea" id="RHEA-COMP:11604"/>
        <dbReference type="ChEBI" id="CHEBI:15378"/>
        <dbReference type="ChEBI" id="CHEBI:29999"/>
        <dbReference type="ChEBI" id="CHEBI:30616"/>
        <dbReference type="ChEBI" id="CHEBI:83421"/>
        <dbReference type="ChEBI" id="CHEBI:456216"/>
        <dbReference type="EC" id="2.7.11.1"/>
    </reaction>
</comment>
<comment type="catalytic activity">
    <reaction>
        <text>L-threonyl-[protein] + ATP = O-phospho-L-threonyl-[protein] + ADP + H(+)</text>
        <dbReference type="Rhea" id="RHEA:46608"/>
        <dbReference type="Rhea" id="RHEA-COMP:11060"/>
        <dbReference type="Rhea" id="RHEA-COMP:11605"/>
        <dbReference type="ChEBI" id="CHEBI:15378"/>
        <dbReference type="ChEBI" id="CHEBI:30013"/>
        <dbReference type="ChEBI" id="CHEBI:30616"/>
        <dbReference type="ChEBI" id="CHEBI:61977"/>
        <dbReference type="ChEBI" id="CHEBI:456216"/>
        <dbReference type="EC" id="2.7.11.1"/>
    </reaction>
</comment>
<comment type="disruption phenotype">
    <text evidence="8 9">Leads to reduced cell size and to sensitivity to rapamycin, caffeine and sodium dodecyl sulfate. Attenuates the virulence of in a mouse model of systemic candidiasis.</text>
</comment>
<comment type="similarity">
    <text evidence="10">Belongs to the protein kinase superfamily. AGC Ser/Thr protein kinase family. cAMP subfamily.</text>
</comment>
<reference key="1">
    <citation type="journal article" date="2004" name="Proc. Natl. Acad. Sci. U.S.A.">
        <title>The diploid genome sequence of Candida albicans.</title>
        <authorList>
            <person name="Jones T."/>
            <person name="Federspiel N.A."/>
            <person name="Chibana H."/>
            <person name="Dungan J."/>
            <person name="Kalman S."/>
            <person name="Magee B.B."/>
            <person name="Newport G."/>
            <person name="Thorstenson Y.R."/>
            <person name="Agabian N."/>
            <person name="Magee P.T."/>
            <person name="Davis R.W."/>
            <person name="Scherer S."/>
        </authorList>
    </citation>
    <scope>NUCLEOTIDE SEQUENCE [LARGE SCALE GENOMIC DNA]</scope>
    <source>
        <strain>SC5314 / ATCC MYA-2876</strain>
    </source>
</reference>
<reference key="2">
    <citation type="journal article" date="2007" name="Genome Biol.">
        <title>Assembly of the Candida albicans genome into sixteen supercontigs aligned on the eight chromosomes.</title>
        <authorList>
            <person name="van het Hoog M."/>
            <person name="Rast T.J."/>
            <person name="Martchenko M."/>
            <person name="Grindle S."/>
            <person name="Dignard D."/>
            <person name="Hogues H."/>
            <person name="Cuomo C."/>
            <person name="Berriman M."/>
            <person name="Scherer S."/>
            <person name="Magee B.B."/>
            <person name="Whiteway M."/>
            <person name="Chibana H."/>
            <person name="Nantel A."/>
            <person name="Magee P.T."/>
        </authorList>
    </citation>
    <scope>GENOME REANNOTATION</scope>
    <source>
        <strain>SC5314 / ATCC MYA-2876</strain>
    </source>
</reference>
<reference key="3">
    <citation type="journal article" date="2013" name="Genome Biol.">
        <title>Assembly of a phased diploid Candida albicans genome facilitates allele-specific measurements and provides a simple model for repeat and indel structure.</title>
        <authorList>
            <person name="Muzzey D."/>
            <person name="Schwartz K."/>
            <person name="Weissman J.S."/>
            <person name="Sherlock G."/>
        </authorList>
    </citation>
    <scope>NUCLEOTIDE SEQUENCE [LARGE SCALE GENOMIC DNA]</scope>
    <scope>GENOME REANNOTATION</scope>
    <source>
        <strain>SC5314 / ATCC MYA-2876</strain>
    </source>
</reference>
<reference key="4">
    <citation type="journal article" date="2003" name="Microbiology">
        <title>Genetic control of chlamydospore formation in Candida albicans.</title>
        <authorList>
            <person name="Nobile C.J."/>
            <person name="Bruno V.M."/>
            <person name="Richard M.L."/>
            <person name="Davis D.A."/>
            <person name="Mitchell A.P."/>
        </authorList>
    </citation>
    <scope>FUNCTION</scope>
</reference>
<reference key="5">
    <citation type="journal article" date="2010" name="FEMS Yeast Res.">
        <title>The protein kinase CaSch9p is required for the cell growth, filamentation and virulence in the human fungal pathogen Candida albicans.</title>
        <authorList>
            <person name="Liu W."/>
            <person name="Zhao J."/>
            <person name="Li X."/>
            <person name="Li Y."/>
            <person name="Jiang L."/>
        </authorList>
    </citation>
    <scope>DISRUPTION PHENOTYPE</scope>
    <scope>FUNCTION</scope>
</reference>
<reference key="6">
    <citation type="journal article" date="2011" name="Eukaryot. Cell">
        <title>Sch9 kinase integrates hypoxia and CO2 sensing to suppress hyphal morphogenesis in Candida albicans.</title>
        <authorList>
            <person name="Stichternoth C."/>
            <person name="Fraund A."/>
            <person name="Setiadi E."/>
            <person name="Giasson L."/>
            <person name="Vecchiarelli A."/>
            <person name="Ernst J.F."/>
        </authorList>
    </citation>
    <scope>DISRUPTION PHENOTYPE</scope>
    <scope>FUNCTION</scope>
</reference>
<sequence>MVDFAKSLFGFGNYKKESSSQSPTPPPSAHSSQEQHHKSNTEEYPQSHLSQQQHSHRYQPPHMSEQSHQFPQQQQQQQQSGTNKFFPKTLVSAAPTTAVANHSSVYGTTSTTTNNYPEAYLNQTFKNNIYNPQQQQQQQAQQPPPEQQQSSAPYQNSANIQQPYGNQWGSSQDQDANIITIDKTGNKLSPASRDSPIKGKLKVTILEAKDIFATQPYVVCSFESSEFVTNAPDSYGKSPVSSFGHNNNQGHNGPRNMYNSNHGPSPKALPMKNSGNLFGQRPSMYQRQLSTPHLNLPNDSSNPIWNHDTIFDVVGSKSELDISVYDGARDDAFLGHVRISPSTDKNNKNESEWLQLGARITGETVSSGHIKIKWEYTSFDNNIKRSYGPDDFHFLRLLGKGTFGQVFQVRKKDTNRVYAMKILSKKVIVKKKEIAHTIGERNILVRTSAASSPFIVGLKFSFQTPSDLFLVTDFMSGGELFFHLQKEGRFNEDRSKFYTAELILALEHLHDNDIVYRDLKPENILLDANGHIALCDFGLSKADLNMDGTTNTFCGTTEYLAPEVLLDEQGYTKMVDFWSLGVLIFEMTCGWSPFHAENTQQMYKNIAFGKVRFPKDVLSPEGRSFVKGLLNRNPKHRLGATDDARELKAHPFFADIDWDLLRAKNIPPPFKPHIVSETDISNFDTEFTSENTSALKRQMEMATTPLSPGIQANFKGFTYVDDSTMDDHFARSYRANAFRPPGSFIPGDPNLPPDEEVLAEQIEEEDEMEVDEDQHMDDEFVNGRFDL</sequence>
<proteinExistence type="inferred from homology"/>
<name>SCH9_CANAL</name>